<comment type="function">
    <text evidence="1 2">Plus-end tracking protein (+TIP) that binds to the plus-end of microtubules and regulates the dynamics of the microtubule cytoskeleton. Recruits other +TIP proteins to microtubules by binding to a conserved Ser-X-Leu-Pro (SXLP) motif in their polypeptide chains. Promotes cytoplasmic microtubule nucleation and elongation. Involved in mitotic spindle positioning by stabilizing microtubules and promoting dynamic connection between astral microtubules and the cortex during mitotic chromosome segregation. Assists chromosome alignment in metaphase by recruiting the SKA complex to the spindle and stabilizing its interactions with microtubule bundles (K-fibers). Also acts as a regulator of minus-end microtubule organization: interacts with the complex formed by AKAP9 and PDE4DIP, leading to recruit CAMSAP2 to the Golgi apparatus, thereby tethering non-centrosomal minus-end microtubules to the Golgi, an important step for polarized cell movement. Promotes elongation of CAMSAP2-decorated microtubule stretches on the minus-end of microtubules. Acts as a regulator of autophagosome transport via interaction with CAMSAP2 (By similarity). Functions downstream of Rho GTPases and DIAPH1 in stable microtubule formation (By similarity). May play a role in cell migration (By similarity).</text>
</comment>
<comment type="subunit">
    <text evidence="1 2">Homodimer. Heterodimer with MAPRE3. Interacts with DCTN1, DCTN2, TERF1 and dynein intermediate chain (By similarity). Interaction with DIAPH1 and DIAPH2 (By similarity). Interacts (via C-terminal residues 206-211) with APC (via C-terminal residues 2674-2845); the interaction inhibits association with and bundling of F-actin (By similarity). Interacts with CLASP2, DST, KIF2C and STIM1; probably required for their targeting to the growing microtubule plus ends. Interacts with MTUS2; interaction is direct and probably targets MTUS2 to microtubules. Interacts (via C-terminus) with SKA1 (via SXIP motif); the interaction is direct and stabilizes the kinetochore-microtubule attachment of the SKA1 complex. Interacts with APC2. Interacts with CLASP1. Interacts with CDK5RAP2 (By similarity). Interacts with MACF1. Interacts with RABL2/RABL2A; binds preferentially to GTP-bound RABL2. Interacts with KCNAB2 (By similarity). Interacts (via C-terminus) with CLIP1. Interacts with SLAIN2 and SLAIN1. Interacts with KIF18B; this interaction is required for efficient accumulation of KIF18B at microtubule plus ends. Interacts with MISP. Interacts with KNSTRN. Interacts with NCKAP5L. Interacts with CAMSAP2. Interacts with PDE4DIP isoform 13/MMG8/SMYLE; this interaction is required for its recruitment to the Golgi apparatus. Forms a pericentrosomal complex with AKAP9, CDK5RAP2 and PDE4DIP isoform 13/MMG8/SMYLE; within this complex, MAPRE1 binding to CDK5RAP2 may be mediated by PDE4DIP (By similarity). Interacts with AKNA (By similarity). Interacts with GAS2L1, GAS2L2, and GAS2L3 (By similarity). Interacts with RARRES1 and AGBL2 (By similarity).</text>
</comment>
<comment type="subcellular location">
    <subcellularLocation>
        <location evidence="1">Cytoplasm</location>
        <location evidence="1">Cytoskeleton</location>
    </subcellularLocation>
    <subcellularLocation>
        <location evidence="1">Cytoplasm</location>
        <location evidence="1">Cytoskeleton</location>
        <location evidence="1">Microtubule organizing center</location>
        <location evidence="1">Centrosome</location>
    </subcellularLocation>
    <subcellularLocation>
        <location evidence="1">Golgi apparatus</location>
    </subcellularLocation>
    <subcellularLocation>
        <location evidence="1">Cytoplasm</location>
        <location evidence="1">Cytoskeleton</location>
        <location evidence="1">Spindle</location>
    </subcellularLocation>
    <subcellularLocation>
        <location evidence="1">Cytoplasm</location>
        <location evidence="1">Cytoskeleton</location>
        <location evidence="1">Spindle pole</location>
    </subcellularLocation>
    <text evidence="1">Associated with the microtubule growing distal tips. In addition to localizing to microtubule plus-ends, also exhibits some localization along the length of the microtubules. Recruitment to the Golgi apparatus requires the presence of PDE4DIP isoform 13/MMG8/SMYLE.</text>
</comment>
<comment type="domain">
    <text evidence="1">Composed of two functionally independent domains. The N-terminal domain forms a hydrophobic cleft involved in microtubule binding and the C-terminal is involved in the formation of mutually exclusive complexes with APC and DCTN1.</text>
</comment>
<comment type="PTM">
    <text evidence="1">Acetylation at Lys-220 by KAT2B/PCAF promotes dynamic kinetochore-microtubule interactions in early mitosis.</text>
</comment>
<comment type="PTM">
    <text evidence="1">Crotonylated by KAT5 during mitosis, promoting astral microtubule plasticity and dynamic connection between astral microtubules and the cortex during mitotic chromosome segregation, thereby ensuring accurate spindle positioning in mitosis. Decrotonylated by HDAC3.</text>
</comment>
<comment type="similarity">
    <text evidence="6">Belongs to the MAPRE family.</text>
</comment>
<proteinExistence type="evidence at transcript level"/>
<sequence length="268" mass="29985">MAVNVYSTSVTSDNLSRHDMLAWINESLQLNLTKIEQLCSGAAYCQFMDMLFPGSIALKKVKFQAKLEHEYIQNFKILQAGFKRMGVDKIIPVDKLVKGKFQDNFEFVQWFKKFFDANYDGKDYDPVAARQGQETAVAPSLVAPALNKPKKPLSSSSAAPQRPISTQRTAAAPKAGPGVVRKNPGVGNGDDEAAELMQQVNVLKLTVEDLEKERDFYFGKLRNIELICQENEGENDPVLQRIVDILYATDEGFVIPDEGGPQEEQEEY</sequence>
<accession>Q5R7Z5</accession>
<dbReference type="EMBL" id="CR859962">
    <property type="protein sequence ID" value="CAH92115.1"/>
    <property type="molecule type" value="mRNA"/>
</dbReference>
<dbReference type="RefSeq" id="NP_001126236.1">
    <property type="nucleotide sequence ID" value="NM_001132764.1"/>
</dbReference>
<dbReference type="RefSeq" id="XP_009231764.1">
    <property type="nucleotide sequence ID" value="XM_009233489.1"/>
</dbReference>
<dbReference type="BMRB" id="Q5R7Z5"/>
<dbReference type="SMR" id="Q5R7Z5"/>
<dbReference type="FunCoup" id="Q5R7Z5">
    <property type="interactions" value="1363"/>
</dbReference>
<dbReference type="STRING" id="9601.ENSPPYP00000012189"/>
<dbReference type="GeneID" id="100173206"/>
<dbReference type="KEGG" id="pon:100173206"/>
<dbReference type="CTD" id="22919"/>
<dbReference type="eggNOG" id="KOG3000">
    <property type="taxonomic scope" value="Eukaryota"/>
</dbReference>
<dbReference type="HOGENOM" id="CLU_041744_1_1_1"/>
<dbReference type="InParanoid" id="Q5R7Z5"/>
<dbReference type="OrthoDB" id="2119228at2759"/>
<dbReference type="Proteomes" id="UP000001595">
    <property type="component" value="Unplaced"/>
</dbReference>
<dbReference type="GO" id="GO:0005813">
    <property type="term" value="C:centrosome"/>
    <property type="evidence" value="ECO:0007669"/>
    <property type="project" value="UniProtKB-SubCell"/>
</dbReference>
<dbReference type="GO" id="GO:0030981">
    <property type="term" value="C:cortical microtubule cytoskeleton"/>
    <property type="evidence" value="ECO:0000250"/>
    <property type="project" value="UniProtKB"/>
</dbReference>
<dbReference type="GO" id="GO:0005794">
    <property type="term" value="C:Golgi apparatus"/>
    <property type="evidence" value="ECO:0007669"/>
    <property type="project" value="UniProtKB-SubCell"/>
</dbReference>
<dbReference type="GO" id="GO:0005874">
    <property type="term" value="C:microtubule"/>
    <property type="evidence" value="ECO:0000250"/>
    <property type="project" value="UniProtKB"/>
</dbReference>
<dbReference type="GO" id="GO:0097431">
    <property type="term" value="C:mitotic spindle pole"/>
    <property type="evidence" value="ECO:0000250"/>
    <property type="project" value="UniProtKB"/>
</dbReference>
<dbReference type="GO" id="GO:0051010">
    <property type="term" value="F:microtubule plus-end binding"/>
    <property type="evidence" value="ECO:0000250"/>
    <property type="project" value="UniProtKB"/>
</dbReference>
<dbReference type="GO" id="GO:0051315">
    <property type="term" value="P:attachment of mitotic spindle microtubules to kinetochore"/>
    <property type="evidence" value="ECO:0000250"/>
    <property type="project" value="UniProtKB"/>
</dbReference>
<dbReference type="GO" id="GO:0051301">
    <property type="term" value="P:cell division"/>
    <property type="evidence" value="ECO:0007669"/>
    <property type="project" value="UniProtKB-KW"/>
</dbReference>
<dbReference type="GO" id="GO:0000132">
    <property type="term" value="P:establishment of mitotic spindle orientation"/>
    <property type="evidence" value="ECO:0000250"/>
    <property type="project" value="UniProtKB"/>
</dbReference>
<dbReference type="GO" id="GO:0031115">
    <property type="term" value="P:negative regulation of microtubule polymerization"/>
    <property type="evidence" value="ECO:0000250"/>
    <property type="project" value="UniProtKB"/>
</dbReference>
<dbReference type="GO" id="GO:1902888">
    <property type="term" value="P:protein localization to astral microtubule"/>
    <property type="evidence" value="ECO:0000250"/>
    <property type="project" value="UniProtKB"/>
</dbReference>
<dbReference type="GO" id="GO:0035372">
    <property type="term" value="P:protein localization to microtubule"/>
    <property type="evidence" value="ECO:0000250"/>
    <property type="project" value="UniProtKB"/>
</dbReference>
<dbReference type="CDD" id="cd00014">
    <property type="entry name" value="CH_SF"/>
    <property type="match status" value="1"/>
</dbReference>
<dbReference type="FunFam" id="1.20.5.1430:FF:000001">
    <property type="entry name" value="microtubule-associated protein RP/EB family member 1"/>
    <property type="match status" value="1"/>
</dbReference>
<dbReference type="FunFam" id="1.10.418.10:FF:000007">
    <property type="entry name" value="Microtubule-associated protein, RP/EB family, member 2"/>
    <property type="match status" value="1"/>
</dbReference>
<dbReference type="Gene3D" id="1.20.5.1430">
    <property type="match status" value="1"/>
</dbReference>
<dbReference type="Gene3D" id="1.10.418.10">
    <property type="entry name" value="Calponin-like domain"/>
    <property type="match status" value="1"/>
</dbReference>
<dbReference type="InterPro" id="IPR001715">
    <property type="entry name" value="CH_dom"/>
</dbReference>
<dbReference type="InterPro" id="IPR036872">
    <property type="entry name" value="CH_dom_sf"/>
</dbReference>
<dbReference type="InterPro" id="IPR004953">
    <property type="entry name" value="EB1_C"/>
</dbReference>
<dbReference type="InterPro" id="IPR036133">
    <property type="entry name" value="EB1_C_sf"/>
</dbReference>
<dbReference type="InterPro" id="IPR027328">
    <property type="entry name" value="MAPRE"/>
</dbReference>
<dbReference type="PANTHER" id="PTHR10623">
    <property type="entry name" value="MICROTUBULE-ASSOCIATED PROTEIN RP/EB FAMILY MEMBER"/>
    <property type="match status" value="1"/>
</dbReference>
<dbReference type="Pfam" id="PF00307">
    <property type="entry name" value="CH"/>
    <property type="match status" value="1"/>
</dbReference>
<dbReference type="Pfam" id="PF03271">
    <property type="entry name" value="EB1"/>
    <property type="match status" value="1"/>
</dbReference>
<dbReference type="SUPFAM" id="SSF47576">
    <property type="entry name" value="Calponin-homology domain, CH-domain"/>
    <property type="match status" value="1"/>
</dbReference>
<dbReference type="SUPFAM" id="SSF140612">
    <property type="entry name" value="EB1 dimerisation domain-like"/>
    <property type="match status" value="1"/>
</dbReference>
<dbReference type="PROSITE" id="PS50021">
    <property type="entry name" value="CH"/>
    <property type="match status" value="1"/>
</dbReference>
<dbReference type="PROSITE" id="PS51230">
    <property type="entry name" value="EB1_C"/>
    <property type="match status" value="1"/>
</dbReference>
<feature type="initiator methionine" description="Removed" evidence="1">
    <location>
        <position position="1"/>
    </location>
</feature>
<feature type="chain" id="PRO_0000213418" description="Microtubule-associated protein RP/EB family member 1">
    <location>
        <begin position="2"/>
        <end position="268"/>
    </location>
</feature>
<feature type="domain" description="Calponin-homology (CH)" evidence="3">
    <location>
        <begin position="14"/>
        <end position="116"/>
    </location>
</feature>
<feature type="domain" description="EB1 C-terminal" evidence="4">
    <location>
        <begin position="185"/>
        <end position="255"/>
    </location>
</feature>
<feature type="region of interest" description="Interaction with MTUS2/TIP150" evidence="1">
    <location>
        <begin position="124"/>
        <end position="268"/>
    </location>
</feature>
<feature type="region of interest" description="Disordered" evidence="5">
    <location>
        <begin position="146"/>
        <end position="191"/>
    </location>
</feature>
<feature type="region of interest" description="Interaction with CDK5RAP2" evidence="1">
    <location>
        <begin position="185"/>
        <end position="268"/>
    </location>
</feature>
<feature type="region of interest" description="Interaction with APC" evidence="1">
    <location>
        <begin position="206"/>
        <end position="211"/>
    </location>
</feature>
<feature type="region of interest" description="DCTN1-binding" evidence="1">
    <location>
        <begin position="208"/>
        <end position="268"/>
    </location>
</feature>
<feature type="region of interest" description="APC-binding" evidence="1">
    <location>
        <begin position="220"/>
        <end position="242"/>
    </location>
</feature>
<feature type="region of interest" description="Interaction with SKA1" evidence="1">
    <location>
        <begin position="232"/>
        <end position="255"/>
    </location>
</feature>
<feature type="compositionally biased region" description="Low complexity" evidence="5">
    <location>
        <begin position="146"/>
        <end position="160"/>
    </location>
</feature>
<feature type="modified residue" description="N-acetylalanine" evidence="1">
    <location>
        <position position="2"/>
    </location>
</feature>
<feature type="modified residue" description="N6-crotonyllysine" evidence="1">
    <location>
        <position position="66"/>
    </location>
</feature>
<feature type="modified residue" description="Phosphotyrosine" evidence="1">
    <location>
        <position position="124"/>
    </location>
</feature>
<feature type="modified residue" description="Phosphoserine" evidence="1">
    <location>
        <position position="155"/>
    </location>
</feature>
<feature type="modified residue" description="Phosphoserine" evidence="1">
    <location>
        <position position="165"/>
    </location>
</feature>
<feature type="modified residue" description="N6-acetyllysine" evidence="1">
    <location>
        <position position="220"/>
    </location>
</feature>
<name>MARE1_PONAB</name>
<protein>
    <recommendedName>
        <fullName>Microtubule-associated protein RP/EB family member 1</fullName>
    </recommendedName>
    <alternativeName>
        <fullName>APC-binding protein EB1</fullName>
    </alternativeName>
    <alternativeName>
        <fullName>End-binding protein 1</fullName>
        <shortName>EB1</shortName>
    </alternativeName>
</protein>
<evidence type="ECO:0000250" key="1">
    <source>
        <dbReference type="UniProtKB" id="Q15691"/>
    </source>
</evidence>
<evidence type="ECO:0000250" key="2">
    <source>
        <dbReference type="UniProtKB" id="Q61166"/>
    </source>
</evidence>
<evidence type="ECO:0000255" key="3">
    <source>
        <dbReference type="PROSITE-ProRule" id="PRU00044"/>
    </source>
</evidence>
<evidence type="ECO:0000255" key="4">
    <source>
        <dbReference type="PROSITE-ProRule" id="PRU00576"/>
    </source>
</evidence>
<evidence type="ECO:0000256" key="5">
    <source>
        <dbReference type="SAM" id="MobiDB-lite"/>
    </source>
</evidence>
<evidence type="ECO:0000305" key="6"/>
<organism>
    <name type="scientific">Pongo abelii</name>
    <name type="common">Sumatran orangutan</name>
    <name type="synonym">Pongo pygmaeus abelii</name>
    <dbReference type="NCBI Taxonomy" id="9601"/>
    <lineage>
        <taxon>Eukaryota</taxon>
        <taxon>Metazoa</taxon>
        <taxon>Chordata</taxon>
        <taxon>Craniata</taxon>
        <taxon>Vertebrata</taxon>
        <taxon>Euteleostomi</taxon>
        <taxon>Mammalia</taxon>
        <taxon>Eutheria</taxon>
        <taxon>Euarchontoglires</taxon>
        <taxon>Primates</taxon>
        <taxon>Haplorrhini</taxon>
        <taxon>Catarrhini</taxon>
        <taxon>Hominidae</taxon>
        <taxon>Pongo</taxon>
    </lineage>
</organism>
<reference key="1">
    <citation type="submission" date="2004-11" db="EMBL/GenBank/DDBJ databases">
        <authorList>
            <consortium name="The German cDNA consortium"/>
        </authorList>
    </citation>
    <scope>NUCLEOTIDE SEQUENCE [LARGE SCALE MRNA]</scope>
    <source>
        <tissue>Kidney</tissue>
    </source>
</reference>
<keyword id="KW-0007">Acetylation</keyword>
<keyword id="KW-0131">Cell cycle</keyword>
<keyword id="KW-0132">Cell division</keyword>
<keyword id="KW-0963">Cytoplasm</keyword>
<keyword id="KW-0206">Cytoskeleton</keyword>
<keyword id="KW-0333">Golgi apparatus</keyword>
<keyword id="KW-0493">Microtubule</keyword>
<keyword id="KW-0498">Mitosis</keyword>
<keyword id="KW-0597">Phosphoprotein</keyword>
<keyword id="KW-1185">Reference proteome</keyword>
<gene>
    <name type="primary">MAPRE1</name>
</gene>